<gene>
    <name evidence="8" type="primary">ivoA</name>
    <name type="ORF">AN4641</name>
    <name type="ORF">ANIA_10576</name>
</gene>
<comment type="function">
    <text evidence="3 4 5 6 7 12">Nonribosomal peptide synthetase; part of the pathway that mediates the biosynthesis of the gray-brown conidiophore pigment (PubMed:23617571, PubMed:28108400). The first step of the pathway is performed by the nonribosomal peptide synthetase ivoA that catalyzes ATP-dependent unidirectional stereoinversion of L-tryptophan to D-tryptophan with complete conversion (PubMed:31573806). While the stereoinversion is catalyzed by the epimerization (E) domain of ivoA, the terminal condensation (C) domain stereoselectively hydrolyzes D-tryptophanyl-S-phosphopantetheine thioester and thus represents a non-canonical C domain function (PubMed:31573806). D-tryptophan is acetylated, probably by an endogenous acetyltransferase (Probable). N-acetyltryptophan is further 6-hydroxylated into N-acetyl-6-hydroxytryptophan (AHT) by the cytochrome P450 monooxygenase ivoC (PubMed:28108400). N-acetyl-6-hydroxytryptophan is substrate of the N-acetyl-6-hydroxytryptophan oxidase ivoB to produce the gray-brown conidiophore pigment (PubMed:2126551, PubMed:28108400, Ref.3).</text>
</comment>
<comment type="catalytic activity">
    <reaction evidence="6">
        <text>L-tryptophan + ATP + H2O = D-tryptophan + AMP + diphosphate + H(+)</text>
        <dbReference type="Rhea" id="RHEA:63892"/>
        <dbReference type="ChEBI" id="CHEBI:15377"/>
        <dbReference type="ChEBI" id="CHEBI:15378"/>
        <dbReference type="ChEBI" id="CHEBI:30616"/>
        <dbReference type="ChEBI" id="CHEBI:33019"/>
        <dbReference type="ChEBI" id="CHEBI:57719"/>
        <dbReference type="ChEBI" id="CHEBI:57912"/>
        <dbReference type="ChEBI" id="CHEBI:456215"/>
    </reaction>
    <physiologicalReaction direction="left-to-right" evidence="6">
        <dbReference type="Rhea" id="RHEA:63893"/>
    </physiologicalReaction>
</comment>
<comment type="biophysicochemical properties">
    <kinetics>
        <KM evidence="6">50 uM for L-tryptophan</KM>
    </kinetics>
</comment>
<comment type="pathway">
    <text evidence="3 5 7">Pigment biosynthesis.</text>
</comment>
<comment type="domain">
    <text evidence="11 12">NRP synthetases are composed of discrete domains (adenylation (A), thiolation (T) or peptidyl carrier protein (PCP) and condensation (C) domains) which when grouped together are referred to as a single module. Each module is responsible for the recognition (via the A domain) and incorporation of a single amino acid into the growing peptide product. Thus, an NRP synthetase is generally composed of one or more modules and can terminate in a thioesterase domain (TE) that releases the newly synthesized peptide from the enzyme. Occasionally, epimerase (E) domains responsible for L- to D-amino acid conversion are present within the NRP synthetase. IvoA has the following mono-modular architecture: A-T-E-C.</text>
</comment>
<comment type="disruption phenotype">
    <text evidence="3">Impairs the production of the gray-brown conidiophore pigment and leads to 'ivory' (colorless) conidiophores (PubMed:2126551).</text>
</comment>
<comment type="similarity">
    <text evidence="10">Belongs to the NRP synthetase family.</text>
</comment>
<comment type="caution">
    <text evidence="5 6 7">Genetic studies provided compelling evidence implicating ivoA in the biosynthesis of N-acetyl-hydroxytryptophan (PubMed:28108400, Ref.3). The proposed acetyltransferase activity of ivoA is however an unlikely fit for a single-module NRPS and further studies showed that ivoA actually catalyzes ATP-dependent unidirectional stereo-inversion of L-tryptophan to D-tryptophan (PubMed:31573806).</text>
</comment>
<comment type="sequence caution" evidence="10">
    <conflict type="erroneous gene model prediction">
        <sequence resource="EMBL-CDS" id="EAA60443"/>
    </conflict>
</comment>
<name>IVOA_EMENI</name>
<evidence type="ECO:0000255" key="1"/>
<evidence type="ECO:0000255" key="2">
    <source>
        <dbReference type="PROSITE-ProRule" id="PRU00258"/>
    </source>
</evidence>
<evidence type="ECO:0000269" key="3">
    <source>
    </source>
</evidence>
<evidence type="ECO:0000269" key="4">
    <source>
    </source>
</evidence>
<evidence type="ECO:0000269" key="5">
    <source>
    </source>
</evidence>
<evidence type="ECO:0000269" key="6">
    <source>
    </source>
</evidence>
<evidence type="ECO:0000269" key="7">
    <source ref="3"/>
</evidence>
<evidence type="ECO:0000303" key="8">
    <source>
    </source>
</evidence>
<evidence type="ECO:0000303" key="9">
    <source ref="3"/>
</evidence>
<evidence type="ECO:0000305" key="10"/>
<evidence type="ECO:0000305" key="11">
    <source>
    </source>
</evidence>
<evidence type="ECO:0000305" key="12">
    <source>
    </source>
</evidence>
<keyword id="KW-0413">Isomerase</keyword>
<keyword id="KW-0596">Phosphopantetheine</keyword>
<keyword id="KW-0597">Phosphoprotein</keyword>
<keyword id="KW-1185">Reference proteome</keyword>
<protein>
    <recommendedName>
        <fullName evidence="8">Nonribosomal peptide synthetase ivoA</fullName>
        <shortName evidence="8">NRPS ivoA</shortName>
        <ecNumber evidence="6">5.1.-.-</ecNumber>
    </recommendedName>
    <alternativeName>
        <fullName evidence="9">Ivory mutation-related protein A</fullName>
    </alternativeName>
</protein>
<organism>
    <name type="scientific">Emericella nidulans (strain FGSC A4 / ATCC 38163 / CBS 112.46 / NRRL 194 / M139)</name>
    <name type="common">Aspergillus nidulans</name>
    <dbReference type="NCBI Taxonomy" id="227321"/>
    <lineage>
        <taxon>Eukaryota</taxon>
        <taxon>Fungi</taxon>
        <taxon>Dikarya</taxon>
        <taxon>Ascomycota</taxon>
        <taxon>Pezizomycotina</taxon>
        <taxon>Eurotiomycetes</taxon>
        <taxon>Eurotiomycetidae</taxon>
        <taxon>Eurotiales</taxon>
        <taxon>Aspergillaceae</taxon>
        <taxon>Aspergillus</taxon>
        <taxon>Aspergillus subgen. Nidulantes</taxon>
    </lineage>
</organism>
<reference key="1">
    <citation type="journal article" date="2005" name="Nature">
        <title>Sequencing of Aspergillus nidulans and comparative analysis with A. fumigatus and A. oryzae.</title>
        <authorList>
            <person name="Galagan J.E."/>
            <person name="Calvo S.E."/>
            <person name="Cuomo C."/>
            <person name="Ma L.-J."/>
            <person name="Wortman J.R."/>
            <person name="Batzoglou S."/>
            <person name="Lee S.-I."/>
            <person name="Bastuerkmen M."/>
            <person name="Spevak C.C."/>
            <person name="Clutterbuck J."/>
            <person name="Kapitonov V."/>
            <person name="Jurka J."/>
            <person name="Scazzocchio C."/>
            <person name="Farman M.L."/>
            <person name="Butler J."/>
            <person name="Purcell S."/>
            <person name="Harris S."/>
            <person name="Braus G.H."/>
            <person name="Draht O."/>
            <person name="Busch S."/>
            <person name="D'Enfert C."/>
            <person name="Bouchier C."/>
            <person name="Goldman G.H."/>
            <person name="Bell-Pedersen D."/>
            <person name="Griffiths-Jones S."/>
            <person name="Doonan J.H."/>
            <person name="Yu J."/>
            <person name="Vienken K."/>
            <person name="Pain A."/>
            <person name="Freitag M."/>
            <person name="Selker E.U."/>
            <person name="Archer D.B."/>
            <person name="Penalva M.A."/>
            <person name="Oakley B.R."/>
            <person name="Momany M."/>
            <person name="Tanaka T."/>
            <person name="Kumagai T."/>
            <person name="Asai K."/>
            <person name="Machida M."/>
            <person name="Nierman W.C."/>
            <person name="Denning D.W."/>
            <person name="Caddick M.X."/>
            <person name="Hynes M."/>
            <person name="Paoletti M."/>
            <person name="Fischer R."/>
            <person name="Miller B.L."/>
            <person name="Dyer P.S."/>
            <person name="Sachs M.S."/>
            <person name="Osmani S.A."/>
            <person name="Birren B.W."/>
        </authorList>
    </citation>
    <scope>NUCLEOTIDE SEQUENCE [LARGE SCALE GENOMIC DNA]</scope>
    <source>
        <strain>FGSC A4 / ATCC 38163 / CBS 112.46 / NRRL 194 / M139</strain>
    </source>
</reference>
<reference key="2">
    <citation type="journal article" date="2009" name="Fungal Genet. Biol.">
        <title>The 2008 update of the Aspergillus nidulans genome annotation: a community effort.</title>
        <authorList>
            <person name="Wortman J.R."/>
            <person name="Gilsenan J.M."/>
            <person name="Joardar V."/>
            <person name="Deegan J."/>
            <person name="Clutterbuck J."/>
            <person name="Andersen M.R."/>
            <person name="Archer D."/>
            <person name="Bencina M."/>
            <person name="Braus G."/>
            <person name="Coutinho P."/>
            <person name="von Dohren H."/>
            <person name="Doonan J."/>
            <person name="Driessen A.J."/>
            <person name="Durek P."/>
            <person name="Espeso E."/>
            <person name="Fekete E."/>
            <person name="Flipphi M."/>
            <person name="Estrada C.G."/>
            <person name="Geysens S."/>
            <person name="Goldman G."/>
            <person name="de Groot P.W."/>
            <person name="Hansen K."/>
            <person name="Harris S.D."/>
            <person name="Heinekamp T."/>
            <person name="Helmstaedt K."/>
            <person name="Henrissat B."/>
            <person name="Hofmann G."/>
            <person name="Homan T."/>
            <person name="Horio T."/>
            <person name="Horiuchi H."/>
            <person name="James S."/>
            <person name="Jones M."/>
            <person name="Karaffa L."/>
            <person name="Karanyi Z."/>
            <person name="Kato M."/>
            <person name="Keller N."/>
            <person name="Kelly D.E."/>
            <person name="Kiel J.A."/>
            <person name="Kim J.M."/>
            <person name="van der Klei I.J."/>
            <person name="Klis F.M."/>
            <person name="Kovalchuk A."/>
            <person name="Krasevec N."/>
            <person name="Kubicek C.P."/>
            <person name="Liu B."/>
            <person name="Maccabe A."/>
            <person name="Meyer V."/>
            <person name="Mirabito P."/>
            <person name="Miskei M."/>
            <person name="Mos M."/>
            <person name="Mullins J."/>
            <person name="Nelson D.R."/>
            <person name="Nielsen J."/>
            <person name="Oakley B.R."/>
            <person name="Osmani S.A."/>
            <person name="Pakula T."/>
            <person name="Paszewski A."/>
            <person name="Paulsen I."/>
            <person name="Pilsyk S."/>
            <person name="Pocsi I."/>
            <person name="Punt P.J."/>
            <person name="Ram A.F."/>
            <person name="Ren Q."/>
            <person name="Robellet X."/>
            <person name="Robson G."/>
            <person name="Seiboth B."/>
            <person name="van Solingen P."/>
            <person name="Specht T."/>
            <person name="Sun J."/>
            <person name="Taheri-Talesh N."/>
            <person name="Takeshita N."/>
            <person name="Ussery D."/>
            <person name="vanKuyk P.A."/>
            <person name="Visser H."/>
            <person name="van de Vondervoort P.J."/>
            <person name="de Vries R.P."/>
            <person name="Walton J."/>
            <person name="Xiang X."/>
            <person name="Xiong Y."/>
            <person name="Zeng A.P."/>
            <person name="Brandt B.W."/>
            <person name="Cornell M.J."/>
            <person name="van den Hondel C.A."/>
            <person name="Visser J."/>
            <person name="Oliver S.G."/>
            <person name="Turner G."/>
        </authorList>
    </citation>
    <scope>GENOME REANNOTATION</scope>
    <source>
        <strain>FGSC A4 / ATCC 38163 / CBS 112.46 / NRRL 194 / M139</strain>
    </source>
</reference>
<reference key="3">
    <citation type="journal article" date="1983" name="Phytochemistry">
        <title>N-acetyl-6-hydroxytryptophan a natural substrate of a monophenol oxidase from Aspergillus nidulans.</title>
        <authorList>
            <person name="McCorkindale N.J."/>
            <person name="Hayes D."/>
            <person name="Johnston G.A."/>
            <person name="Clutterbuck A.J."/>
        </authorList>
    </citation>
    <scope>FUNCTION</scope>
    <scope>DISRUPTION PHENOTYPE</scope>
    <scope>PATHWAY</scope>
</reference>
<reference key="4">
    <citation type="journal article" date="1990" name="J. Gen. Microbiol.">
        <title>N-acetyl-6-hydroxytryptophan oxidase, a developmentally controlled phenol oxidase from Aspergillus nidulans.</title>
        <authorList>
            <person name="Birse C.E."/>
            <person name="Clutterbuck A.J."/>
        </authorList>
    </citation>
    <scope>FUNCTION</scope>
    <scope>DISRUPTION PHENOTYPE</scope>
    <scope>PATHWAY</scope>
</reference>
<reference key="5">
    <citation type="journal article" date="2013" name="BMC Microbiol.">
        <title>Comprehensive annotation of secondary metabolite biosynthetic genes and gene clusters of Aspergillus nidulans, A. fumigatus, A. niger and A. oryzae.</title>
        <authorList>
            <person name="Inglis D.O."/>
            <person name="Binkley J."/>
            <person name="Skrzypek M.S."/>
            <person name="Arnaud M.B."/>
            <person name="Cerqueira G.C."/>
            <person name="Shah P."/>
            <person name="Wymore F."/>
            <person name="Wortman J.R."/>
            <person name="Sherlock G."/>
        </authorList>
    </citation>
    <scope>IDENTIFICATION OF THE IVO CLUSTER</scope>
</reference>
<reference key="6">
    <citation type="journal article" date="2017" name="Fungal Genet. Biol.">
        <title>Overexpression of a three-gene conidial pigment biosynthetic pathway in Aspergillus nidulans reveals the first NRPS known to acetylate tryptophan.</title>
        <authorList>
            <person name="Sung C.T."/>
            <person name="Chang S.L."/>
            <person name="Entwistle R."/>
            <person name="Ahn G."/>
            <person name="Lin T.S."/>
            <person name="Petrova V."/>
            <person name="Yeh H.H."/>
            <person name="Praseuth M.B."/>
            <person name="Chiang Y.M."/>
            <person name="Oakley B.R."/>
            <person name="Wang C.C.C."/>
        </authorList>
    </citation>
    <scope>FUNCTION</scope>
    <scope>PATHWAY</scope>
</reference>
<reference key="7">
    <citation type="journal article" date="2019" name="J. Am. Chem. Soc.">
        <title>Complete stereoinversion of L-tryptophan by a fungal single-module nonribosomal peptide synthetase.</title>
        <authorList>
            <person name="Hai Y."/>
            <person name="Jenner M."/>
            <person name="Tang Y."/>
        </authorList>
    </citation>
    <scope>FUNCTION</scope>
    <scope>DOMAIN</scope>
    <scope>CATALYTIC ACTIVITY</scope>
    <scope>BIOPHYSICOCHEMICAL PROPERTIES</scope>
    <scope>MUTAGENESIS OF SER-785; HIS-963 AND HIS-1428</scope>
</reference>
<proteinExistence type="evidence at protein level"/>
<sequence length="1704" mass="188956">MASPIIQPAGAGIHDIFTQLELWESIDKGLSMITILRDNDVLWKPFLQLTLFNQLNIVRKAWSATIQKASESDKVPTLKDVYTSESSFIAQALLDTKNLQITPPATPRTALSGALLAKTIVIFHHSERAQEELGTELPEEVRSLVNQNAICLKVLYNANQWHIDLHYKRDSLSSAQAGEVAEIFEQYLEEALEAVASAIPPSPPVEDDNAGHGGLCKERTDCPKVNRCIHDLIEEQAIARPDQEGICAYDGSLSYAGLSKLSSVLAEQLKTFGARPEQRVAILMNKSFWYPVVVLAVLKSGAAFVPLDPSHPKNRLKQLISEIEPCALITTSVLSELADDLGCPSLAIDSDLTRSKEGSTTALLPNTSASPNNAAYIIFTSGSTGKPKGVVVEHSALSTSAITRGVVLGLGPDSRVLQYAPHTFDVSVDEILTTLIHGGCVCVPSEDDRFSIAHFMESARVTVALLTPTSARTLHPDEVPSLRILQTGGEVLTEDVNDKWSNRVTLFNVYGPTEASVACVISNRTGLKGAGHVLGQAVGGKLWIVDPDDIERHLPDNEVGELVISGAILARGYFRDPSRTESSFVRMRNGERVYRTGDLASMDSAGTIIYHGRKDLEVKIRGQRINIAEIEIAILQCDLVHSVVVEYPRSGLFEKKLVAVLRFEDSSSDAEDGLFGGAKGLTEDIYCLLLSHVSSVLTPAMIPSKWLSLPCVPQMPSGKADRKQVRGWLEDMDKRTYTRIFHPNGTDNLISDPSDSMVAIWLKVLKLEPQSLRLDQSFIRNGGDSIMAMEARHQAHEAGINIDVRELLGSRALQEIGEMATKTSAVEEVSKIEDDRDEPFPLSPVQQMYFDKVSDPSLGLQQRVCVEIMTKIQPDMLREALNHVIQKHRMLAARFTKHMGQWMQQVPFGKNLKHLSRCHIYSQAVGSLGDFCSEPMALEDGTLLHAHLQSSGERQTLVLCVHHLVVDFVSWRVILQDLHDALAAAQNGLPSGISRSTLTFQQWCREQTKYASTLIPEAVLPFAPGPVNLRFWQPSNVQAVSNTYSEIVQHDFRLSSTQTTQMLEKFTTATVHPTDLMLATFALAFKRIFTERDTPTIFIEGHGREPWHASLDVSQTVGWFTAAFPIHLPKDTLLNTTTAILGASERRRSVLANGHPYWACRYLSPNGQKVFGDDPRHQEMEFVFNYAGSIVQRAPGQTLFAENVRIAEIGHPNCERFSLFDIGAAIEMPSSELVVSFTFPKGIAHRERVAELVKTYQELLETAVERDLDLSAKLSSPLVCPADVVRSLEVNGVCIERDVEIVYTPSSIQQHMLWRQSQEPWFYRVQGDWTIEKTTTQSEPVDIDRLSHAWNQVVHRHTTLRTVFRYSSEEERFVAIVLHEVKPAISIIRKGIQTSGSLCRDDDLSPPHRMVLREKDNGSVVCELEFSHTIIDAASRSIVVQDLLDAYDGKLAHRPLDFPPFWEYIRLAQSSTPSARKEELHRAGRVVTLPFQPTHVLSKVPEACKKNEITISSFFMTAWSIVLAKHFVAHNQRVDSTSSQAVAFDYVLSDRSANIPGIESAVGPYIRLPTLETHVKEGVSLKNIARGLHAQCTFQSLSQSTQDGSSLELPSKATALQKYSTLVNIRNSGSDSLDLVSDSGEWKWILQGFSDPWDYDLVFAVNVHAGKVTGWTVEYADGVVEHSAADEIAKDLNDVVERMVCEII</sequence>
<feature type="chain" id="PRO_0000444120" description="Nonribosomal peptide synthetase ivoA">
    <location>
        <begin position="1"/>
        <end position="1704"/>
    </location>
</feature>
<feature type="domain" description="Carrier" evidence="2 11 12">
    <location>
        <begin position="748"/>
        <end position="827"/>
    </location>
</feature>
<feature type="region of interest" description="Adenylation" evidence="1 11 12">
    <location>
        <begin position="234"/>
        <end position="620"/>
    </location>
</feature>
<feature type="region of interest" description="Epimerization (E) domain" evidence="1 12">
    <location>
        <begin position="840"/>
        <end position="1266"/>
    </location>
</feature>
<feature type="region of interest" description="Condensation" evidence="1 11 12">
    <location>
        <begin position="1325"/>
        <end position="1477"/>
    </location>
</feature>
<feature type="modified residue" description="O-(pantetheine 4'-phosphoryl)serine" evidence="2">
    <location>
        <position position="785"/>
    </location>
</feature>
<feature type="mutagenesis site" description="Inactivates the T domain by completely abolishing the incorporation of L-tryptophan." evidence="6">
    <original>S</original>
    <variation>A</variation>
    <location>
        <position position="785"/>
    </location>
</feature>
<feature type="mutagenesis site" description="Compromises the catalytic activity, but does not affect substrate binding at the A domain." evidence="6">
    <original>H</original>
    <variation>A</variation>
    <location>
        <position position="963"/>
    </location>
</feature>
<feature type="mutagenesis site" description="Compromises the catalytic activity, but does not affect substrate binding at the A domain." evidence="6">
    <original>H</original>
    <variation>A</variation>
    <location>
        <position position="1428"/>
    </location>
</feature>
<dbReference type="EC" id="5.1.-.-" evidence="6"/>
<dbReference type="EMBL" id="BN001303">
    <property type="protein sequence ID" value="CBF77087.1"/>
    <property type="molecule type" value="Genomic_DNA"/>
</dbReference>
<dbReference type="EMBL" id="AACD01000079">
    <property type="protein sequence ID" value="EAA60443.1"/>
    <property type="status" value="ALT_SEQ"/>
    <property type="molecule type" value="Genomic_DNA"/>
</dbReference>
<dbReference type="RefSeq" id="XP_050467679.1">
    <property type="nucleotide sequence ID" value="XM_050611677.1"/>
</dbReference>
<dbReference type="RefSeq" id="XP_662245.1">
    <property type="nucleotide sequence ID" value="XM_657153.1"/>
</dbReference>
<dbReference type="SMR" id="C8V7P4"/>
<dbReference type="STRING" id="227321.C8V7P4"/>
<dbReference type="EnsemblFungi" id="CBF77087">
    <property type="protein sequence ID" value="CBF77087"/>
    <property type="gene ID" value="ANIA_10576"/>
</dbReference>
<dbReference type="GeneID" id="74896483"/>
<dbReference type="VEuPathDB" id="FungiDB:AN10576"/>
<dbReference type="eggNOG" id="KOG1178">
    <property type="taxonomic scope" value="Eukaryota"/>
</dbReference>
<dbReference type="HOGENOM" id="CLU_000022_60_2_1"/>
<dbReference type="InParanoid" id="C8V7P4"/>
<dbReference type="OMA" id="QYAWHRL"/>
<dbReference type="OrthoDB" id="416786at2759"/>
<dbReference type="Proteomes" id="UP000000560">
    <property type="component" value="Chromosome III"/>
</dbReference>
<dbReference type="GO" id="GO:0005737">
    <property type="term" value="C:cytoplasm"/>
    <property type="evidence" value="ECO:0000318"/>
    <property type="project" value="GO_Central"/>
</dbReference>
<dbReference type="GO" id="GO:0009277">
    <property type="term" value="C:fungal-type cell wall"/>
    <property type="evidence" value="ECO:0000314"/>
    <property type="project" value="AspGD"/>
</dbReference>
<dbReference type="GO" id="GO:0016853">
    <property type="term" value="F:isomerase activity"/>
    <property type="evidence" value="ECO:0007669"/>
    <property type="project" value="UniProtKB-KW"/>
</dbReference>
<dbReference type="GO" id="GO:0031177">
    <property type="term" value="F:phosphopantetheine binding"/>
    <property type="evidence" value="ECO:0000318"/>
    <property type="project" value="GO_Central"/>
</dbReference>
<dbReference type="GO" id="GO:0043041">
    <property type="term" value="P:amino acid activation for nonribosomal peptide biosynthetic process"/>
    <property type="evidence" value="ECO:0000318"/>
    <property type="project" value="GO_Central"/>
</dbReference>
<dbReference type="GO" id="GO:0048315">
    <property type="term" value="P:conidium formation"/>
    <property type="evidence" value="ECO:0000315"/>
    <property type="project" value="AspGD"/>
</dbReference>
<dbReference type="GO" id="GO:0046148">
    <property type="term" value="P:pigment biosynthetic process"/>
    <property type="evidence" value="ECO:0000315"/>
    <property type="project" value="AspGD"/>
</dbReference>
<dbReference type="GO" id="GO:0075307">
    <property type="term" value="P:positive regulation of conidium formation"/>
    <property type="evidence" value="ECO:0000315"/>
    <property type="project" value="AspGD"/>
</dbReference>
<dbReference type="GO" id="GO:0019748">
    <property type="term" value="P:secondary metabolic process"/>
    <property type="evidence" value="ECO:0000303"/>
    <property type="project" value="AspGD"/>
</dbReference>
<dbReference type="GO" id="GO:0044550">
    <property type="term" value="P:secondary metabolite biosynthetic process"/>
    <property type="evidence" value="ECO:0000318"/>
    <property type="project" value="GO_Central"/>
</dbReference>
<dbReference type="CDD" id="cd05918">
    <property type="entry name" value="A_NRPS_SidN3_like"/>
    <property type="match status" value="1"/>
</dbReference>
<dbReference type="FunFam" id="3.30.559.30:FF:000002">
    <property type="entry name" value="Nonribosomal peptide synthase Pes1"/>
    <property type="match status" value="1"/>
</dbReference>
<dbReference type="Gene3D" id="3.30.300.30">
    <property type="match status" value="1"/>
</dbReference>
<dbReference type="Gene3D" id="1.10.1200.10">
    <property type="entry name" value="ACP-like"/>
    <property type="match status" value="1"/>
</dbReference>
<dbReference type="Gene3D" id="3.30.559.10">
    <property type="entry name" value="Chloramphenicol acetyltransferase-like domain"/>
    <property type="match status" value="2"/>
</dbReference>
<dbReference type="Gene3D" id="3.40.50.12780">
    <property type="entry name" value="N-terminal domain of ligase-like"/>
    <property type="match status" value="1"/>
</dbReference>
<dbReference type="Gene3D" id="3.30.559.30">
    <property type="entry name" value="Nonribosomal peptide synthetase, condensation domain"/>
    <property type="match status" value="2"/>
</dbReference>
<dbReference type="InterPro" id="IPR010071">
    <property type="entry name" value="AA_adenyl_dom"/>
</dbReference>
<dbReference type="InterPro" id="IPR036736">
    <property type="entry name" value="ACP-like_sf"/>
</dbReference>
<dbReference type="InterPro" id="IPR045851">
    <property type="entry name" value="AMP-bd_C_sf"/>
</dbReference>
<dbReference type="InterPro" id="IPR020845">
    <property type="entry name" value="AMP-binding_CS"/>
</dbReference>
<dbReference type="InterPro" id="IPR000873">
    <property type="entry name" value="AMP-dep_synth/lig_dom"/>
</dbReference>
<dbReference type="InterPro" id="IPR042099">
    <property type="entry name" value="ANL_N_sf"/>
</dbReference>
<dbReference type="InterPro" id="IPR023213">
    <property type="entry name" value="CAT-like_dom_sf"/>
</dbReference>
<dbReference type="InterPro" id="IPR001242">
    <property type="entry name" value="Condensatn"/>
</dbReference>
<dbReference type="InterPro" id="IPR009081">
    <property type="entry name" value="PP-bd_ACP"/>
</dbReference>
<dbReference type="NCBIfam" id="TIGR01733">
    <property type="entry name" value="AA-adenyl-dom"/>
    <property type="match status" value="1"/>
</dbReference>
<dbReference type="PANTHER" id="PTHR45527">
    <property type="entry name" value="NONRIBOSOMAL PEPTIDE SYNTHETASE"/>
    <property type="match status" value="1"/>
</dbReference>
<dbReference type="PANTHER" id="PTHR45527:SF12">
    <property type="entry name" value="NONRIBOSOMAL PEPTIDE SYNTHETASE IVOA"/>
    <property type="match status" value="1"/>
</dbReference>
<dbReference type="Pfam" id="PF00501">
    <property type="entry name" value="AMP-binding"/>
    <property type="match status" value="1"/>
</dbReference>
<dbReference type="Pfam" id="PF00668">
    <property type="entry name" value="Condensation"/>
    <property type="match status" value="2"/>
</dbReference>
<dbReference type="Pfam" id="PF00550">
    <property type="entry name" value="PP-binding"/>
    <property type="match status" value="1"/>
</dbReference>
<dbReference type="SUPFAM" id="SSF56801">
    <property type="entry name" value="Acetyl-CoA synthetase-like"/>
    <property type="match status" value="1"/>
</dbReference>
<dbReference type="SUPFAM" id="SSF47336">
    <property type="entry name" value="ACP-like"/>
    <property type="match status" value="1"/>
</dbReference>
<dbReference type="SUPFAM" id="SSF52777">
    <property type="entry name" value="CoA-dependent acyltransferases"/>
    <property type="match status" value="4"/>
</dbReference>
<dbReference type="PROSITE" id="PS00455">
    <property type="entry name" value="AMP_BINDING"/>
    <property type="match status" value="1"/>
</dbReference>
<dbReference type="PROSITE" id="PS50075">
    <property type="entry name" value="CARRIER"/>
    <property type="match status" value="1"/>
</dbReference>
<accession>C8V7P4</accession>
<accession>Q5B489</accession>